<protein>
    <recommendedName>
        <fullName evidence="1">Riboflavin biosynthesis protein RibBA</fullName>
    </recommendedName>
    <domain>
        <recommendedName>
            <fullName evidence="1">3,4-dihydroxy-2-butanone 4-phosphate synthase</fullName>
            <shortName evidence="1">DHBP synthase</shortName>
            <ecNumber evidence="1">4.1.99.12</ecNumber>
        </recommendedName>
    </domain>
    <domain>
        <recommendedName>
            <fullName evidence="1">GTP cyclohydrolase-2</fullName>
            <ecNumber evidence="1">3.5.4.25</ecNumber>
        </recommendedName>
        <alternativeName>
            <fullName evidence="1">GTP cyclohydrolase II</fullName>
        </alternativeName>
    </domain>
</protein>
<name>RIBBA_THEP3</name>
<sequence length="396" mass="44558">MFDRIEDAIEDIKQGKMIIVVDDENRENEGDLVMAAEKVTGEHINFMIKYGRGLVCVPMTEKRLNELGIYQMVENNTDHKETAFTVSVDYKECTTGISAFERALTVKKLVDDNSKPEDFTKPGHIFPLRAKDGGVLVRAGHTEAAVDLAVLAGLKPAGVICEIIKDDGNMARLPDLLEFAKKFGLRIISIEDLIKYRMKNEILVRRVAQAKLPTKYGNFEIVGYEEILTRKQHVALIKGDINKEPVLVRIHSECLTGDILGSLRCDCGDQLHAAMERIGQEGGVLVYLRQEGRGIGLLNKIKAYHLQDQGLDTVEANIKLGFPPDLREYSIAAQILKDIGVKKIRIMTNNPQKIMELSDYGLDVVERVSIEICPNHYNEKYLKTKKERMGHLILEV</sequence>
<accession>B0KAI2</accession>
<proteinExistence type="inferred from homology"/>
<comment type="function">
    <text evidence="1">Catalyzes the conversion of D-ribulose 5-phosphate to formate and 3,4-dihydroxy-2-butanone 4-phosphate.</text>
</comment>
<comment type="function">
    <text evidence="1">Catalyzes the conversion of GTP to 2,5-diamino-6-ribosylamino-4(3H)-pyrimidinone 5'-phosphate (DARP), formate and pyrophosphate.</text>
</comment>
<comment type="catalytic activity">
    <reaction evidence="1">
        <text>D-ribulose 5-phosphate = (2S)-2-hydroxy-3-oxobutyl phosphate + formate + H(+)</text>
        <dbReference type="Rhea" id="RHEA:18457"/>
        <dbReference type="ChEBI" id="CHEBI:15378"/>
        <dbReference type="ChEBI" id="CHEBI:15740"/>
        <dbReference type="ChEBI" id="CHEBI:58121"/>
        <dbReference type="ChEBI" id="CHEBI:58830"/>
        <dbReference type="EC" id="4.1.99.12"/>
    </reaction>
</comment>
<comment type="catalytic activity">
    <reaction evidence="1">
        <text>GTP + 4 H2O = 2,5-diamino-6-hydroxy-4-(5-phosphoribosylamino)-pyrimidine + formate + 2 phosphate + 3 H(+)</text>
        <dbReference type="Rhea" id="RHEA:23704"/>
        <dbReference type="ChEBI" id="CHEBI:15377"/>
        <dbReference type="ChEBI" id="CHEBI:15378"/>
        <dbReference type="ChEBI" id="CHEBI:15740"/>
        <dbReference type="ChEBI" id="CHEBI:37565"/>
        <dbReference type="ChEBI" id="CHEBI:43474"/>
        <dbReference type="ChEBI" id="CHEBI:58614"/>
        <dbReference type="EC" id="3.5.4.25"/>
    </reaction>
</comment>
<comment type="cofactor">
    <cofactor evidence="1">
        <name>Mg(2+)</name>
        <dbReference type="ChEBI" id="CHEBI:18420"/>
    </cofactor>
    <cofactor evidence="1">
        <name>Mn(2+)</name>
        <dbReference type="ChEBI" id="CHEBI:29035"/>
    </cofactor>
    <text evidence="1">Binds 2 divalent metal cations per subunit. Magnesium or manganese.</text>
</comment>
<comment type="cofactor">
    <cofactor evidence="1">
        <name>Zn(2+)</name>
        <dbReference type="ChEBI" id="CHEBI:29105"/>
    </cofactor>
    <text evidence="1">Binds 1 zinc ion per subunit.</text>
</comment>
<comment type="pathway">
    <text evidence="1">Cofactor biosynthesis; riboflavin biosynthesis; 2-hydroxy-3-oxobutyl phosphate from D-ribulose 5-phosphate: step 1/1.</text>
</comment>
<comment type="pathway">
    <text evidence="1">Cofactor biosynthesis; riboflavin biosynthesis; 5-amino-6-(D-ribitylamino)uracil from GTP: step 1/4.</text>
</comment>
<comment type="similarity">
    <text evidence="1">In the N-terminal section; belongs to the DHBP synthase family.</text>
</comment>
<comment type="similarity">
    <text evidence="1">In the C-terminal section; belongs to the GTP cyclohydrolase II family.</text>
</comment>
<keyword id="KW-0342">GTP-binding</keyword>
<keyword id="KW-0378">Hydrolase</keyword>
<keyword id="KW-0456">Lyase</keyword>
<keyword id="KW-0460">Magnesium</keyword>
<keyword id="KW-0464">Manganese</keyword>
<keyword id="KW-0479">Metal-binding</keyword>
<keyword id="KW-0511">Multifunctional enzyme</keyword>
<keyword id="KW-0547">Nucleotide-binding</keyword>
<keyword id="KW-1185">Reference proteome</keyword>
<keyword id="KW-0686">Riboflavin biosynthesis</keyword>
<keyword id="KW-0862">Zinc</keyword>
<organism>
    <name type="scientific">Thermoanaerobacter pseudethanolicus (strain ATCC 33223 / 39E)</name>
    <name type="common">Clostridium thermohydrosulfuricum</name>
    <dbReference type="NCBI Taxonomy" id="340099"/>
    <lineage>
        <taxon>Bacteria</taxon>
        <taxon>Bacillati</taxon>
        <taxon>Bacillota</taxon>
        <taxon>Clostridia</taxon>
        <taxon>Thermoanaerobacterales</taxon>
        <taxon>Thermoanaerobacteraceae</taxon>
        <taxon>Thermoanaerobacter</taxon>
    </lineage>
</organism>
<feature type="chain" id="PRO_1000140367" description="Riboflavin biosynthesis protein RibBA">
    <location>
        <begin position="1"/>
        <end position="396"/>
    </location>
</feature>
<feature type="region of interest" description="DHBP synthase">
    <location>
        <begin position="1"/>
        <end position="199"/>
    </location>
</feature>
<feature type="region of interest" description="GTP cyclohydrolase II">
    <location>
        <begin position="200"/>
        <end position="396"/>
    </location>
</feature>
<feature type="active site" description="Proton acceptor; for GTP cyclohydrolase activity" evidence="1">
    <location>
        <position position="325"/>
    </location>
</feature>
<feature type="active site" description="Nucleophile; for GTP cyclohydrolase activity" evidence="1">
    <location>
        <position position="327"/>
    </location>
</feature>
<feature type="binding site" evidence="1">
    <location>
        <begin position="26"/>
        <end position="27"/>
    </location>
    <ligand>
        <name>D-ribulose 5-phosphate</name>
        <dbReference type="ChEBI" id="CHEBI:58121"/>
    </ligand>
</feature>
<feature type="binding site" evidence="1">
    <location>
        <position position="27"/>
    </location>
    <ligand>
        <name>Mg(2+)</name>
        <dbReference type="ChEBI" id="CHEBI:18420"/>
        <label>1</label>
    </ligand>
</feature>
<feature type="binding site" evidence="1">
    <location>
        <position position="27"/>
    </location>
    <ligand>
        <name>Mg(2+)</name>
        <dbReference type="ChEBI" id="CHEBI:18420"/>
        <label>2</label>
    </ligand>
</feature>
<feature type="binding site" evidence="1">
    <location>
        <position position="31"/>
    </location>
    <ligand>
        <name>D-ribulose 5-phosphate</name>
        <dbReference type="ChEBI" id="CHEBI:58121"/>
    </ligand>
</feature>
<feature type="binding site" evidence="1">
    <location>
        <begin position="138"/>
        <end position="142"/>
    </location>
    <ligand>
        <name>D-ribulose 5-phosphate</name>
        <dbReference type="ChEBI" id="CHEBI:58121"/>
    </ligand>
</feature>
<feature type="binding site" evidence="1">
    <location>
        <position position="141"/>
    </location>
    <ligand>
        <name>Mg(2+)</name>
        <dbReference type="ChEBI" id="CHEBI:18420"/>
        <label>2</label>
    </ligand>
</feature>
<feature type="binding site" evidence="1">
    <location>
        <position position="162"/>
    </location>
    <ligand>
        <name>D-ribulose 5-phosphate</name>
        <dbReference type="ChEBI" id="CHEBI:58121"/>
    </ligand>
</feature>
<feature type="binding site" evidence="1">
    <location>
        <begin position="249"/>
        <end position="253"/>
    </location>
    <ligand>
        <name>GTP</name>
        <dbReference type="ChEBI" id="CHEBI:37565"/>
    </ligand>
</feature>
<feature type="binding site" evidence="1">
    <location>
        <position position="254"/>
    </location>
    <ligand>
        <name>Zn(2+)</name>
        <dbReference type="ChEBI" id="CHEBI:29105"/>
        <note>catalytic</note>
    </ligand>
</feature>
<feature type="binding site" evidence="1">
    <location>
        <position position="265"/>
    </location>
    <ligand>
        <name>Zn(2+)</name>
        <dbReference type="ChEBI" id="CHEBI:29105"/>
        <note>catalytic</note>
    </ligand>
</feature>
<feature type="binding site" evidence="1">
    <location>
        <position position="267"/>
    </location>
    <ligand>
        <name>Zn(2+)</name>
        <dbReference type="ChEBI" id="CHEBI:29105"/>
        <note>catalytic</note>
    </ligand>
</feature>
<feature type="binding site" evidence="1">
    <location>
        <position position="270"/>
    </location>
    <ligand>
        <name>GTP</name>
        <dbReference type="ChEBI" id="CHEBI:37565"/>
    </ligand>
</feature>
<feature type="binding site" evidence="1">
    <location>
        <begin position="291"/>
        <end position="293"/>
    </location>
    <ligand>
        <name>GTP</name>
        <dbReference type="ChEBI" id="CHEBI:37565"/>
    </ligand>
</feature>
<feature type="binding site" evidence="1">
    <location>
        <position position="313"/>
    </location>
    <ligand>
        <name>GTP</name>
        <dbReference type="ChEBI" id="CHEBI:37565"/>
    </ligand>
</feature>
<feature type="binding site" evidence="1">
    <location>
        <position position="348"/>
    </location>
    <ligand>
        <name>GTP</name>
        <dbReference type="ChEBI" id="CHEBI:37565"/>
    </ligand>
</feature>
<feature type="binding site" evidence="1">
    <location>
        <position position="353"/>
    </location>
    <ligand>
        <name>GTP</name>
        <dbReference type="ChEBI" id="CHEBI:37565"/>
    </ligand>
</feature>
<feature type="site" description="Essential for DHBP synthase activity" evidence="1">
    <location>
        <position position="124"/>
    </location>
</feature>
<feature type="site" description="Essential for DHBP synthase activity" evidence="1">
    <location>
        <position position="162"/>
    </location>
</feature>
<dbReference type="EC" id="4.1.99.12" evidence="1"/>
<dbReference type="EC" id="3.5.4.25" evidence="1"/>
<dbReference type="EMBL" id="CP000924">
    <property type="protein sequence ID" value="ABY93696.1"/>
    <property type="molecule type" value="Genomic_DNA"/>
</dbReference>
<dbReference type="RefSeq" id="WP_003867387.1">
    <property type="nucleotide sequence ID" value="NC_010321.1"/>
</dbReference>
<dbReference type="SMR" id="B0KAI2"/>
<dbReference type="STRING" id="340099.Teth39_0023"/>
<dbReference type="KEGG" id="tpd:Teth39_0023"/>
<dbReference type="eggNOG" id="COG0108">
    <property type="taxonomic scope" value="Bacteria"/>
</dbReference>
<dbReference type="eggNOG" id="COG0807">
    <property type="taxonomic scope" value="Bacteria"/>
</dbReference>
<dbReference type="HOGENOM" id="CLU_020273_1_2_9"/>
<dbReference type="UniPathway" id="UPA00275">
    <property type="reaction ID" value="UER00399"/>
</dbReference>
<dbReference type="UniPathway" id="UPA00275">
    <property type="reaction ID" value="UER00400"/>
</dbReference>
<dbReference type="Proteomes" id="UP000002156">
    <property type="component" value="Chromosome"/>
</dbReference>
<dbReference type="GO" id="GO:0005829">
    <property type="term" value="C:cytosol"/>
    <property type="evidence" value="ECO:0007669"/>
    <property type="project" value="TreeGrafter"/>
</dbReference>
<dbReference type="GO" id="GO:0008686">
    <property type="term" value="F:3,4-dihydroxy-2-butanone-4-phosphate synthase activity"/>
    <property type="evidence" value="ECO:0007669"/>
    <property type="project" value="UniProtKB-UniRule"/>
</dbReference>
<dbReference type="GO" id="GO:0005525">
    <property type="term" value="F:GTP binding"/>
    <property type="evidence" value="ECO:0007669"/>
    <property type="project" value="UniProtKB-KW"/>
</dbReference>
<dbReference type="GO" id="GO:0003935">
    <property type="term" value="F:GTP cyclohydrolase II activity"/>
    <property type="evidence" value="ECO:0007669"/>
    <property type="project" value="UniProtKB-UniRule"/>
</dbReference>
<dbReference type="GO" id="GO:0000287">
    <property type="term" value="F:magnesium ion binding"/>
    <property type="evidence" value="ECO:0007669"/>
    <property type="project" value="UniProtKB-UniRule"/>
</dbReference>
<dbReference type="GO" id="GO:0030145">
    <property type="term" value="F:manganese ion binding"/>
    <property type="evidence" value="ECO:0007669"/>
    <property type="project" value="UniProtKB-UniRule"/>
</dbReference>
<dbReference type="GO" id="GO:0008270">
    <property type="term" value="F:zinc ion binding"/>
    <property type="evidence" value="ECO:0007669"/>
    <property type="project" value="UniProtKB-UniRule"/>
</dbReference>
<dbReference type="GO" id="GO:0009231">
    <property type="term" value="P:riboflavin biosynthetic process"/>
    <property type="evidence" value="ECO:0007669"/>
    <property type="project" value="UniProtKB-UniRule"/>
</dbReference>
<dbReference type="CDD" id="cd00641">
    <property type="entry name" value="GTP_cyclohydro2"/>
    <property type="match status" value="1"/>
</dbReference>
<dbReference type="FunFam" id="3.40.50.10990:FF:000001">
    <property type="entry name" value="Riboflavin biosynthesis protein RibBA"/>
    <property type="match status" value="1"/>
</dbReference>
<dbReference type="FunFam" id="3.90.870.10:FF:000001">
    <property type="entry name" value="Riboflavin biosynthesis protein RibBA"/>
    <property type="match status" value="1"/>
</dbReference>
<dbReference type="Gene3D" id="3.90.870.10">
    <property type="entry name" value="DHBP synthase"/>
    <property type="match status" value="1"/>
</dbReference>
<dbReference type="Gene3D" id="3.40.50.10990">
    <property type="entry name" value="GTP cyclohydrolase II"/>
    <property type="match status" value="1"/>
</dbReference>
<dbReference type="HAMAP" id="MF_00179">
    <property type="entry name" value="RibA"/>
    <property type="match status" value="1"/>
</dbReference>
<dbReference type="HAMAP" id="MF_00180">
    <property type="entry name" value="RibB"/>
    <property type="match status" value="1"/>
</dbReference>
<dbReference type="HAMAP" id="MF_01283">
    <property type="entry name" value="RibBA"/>
    <property type="match status" value="1"/>
</dbReference>
<dbReference type="InterPro" id="IPR017945">
    <property type="entry name" value="DHBP_synth_RibB-like_a/b_dom"/>
</dbReference>
<dbReference type="InterPro" id="IPR000422">
    <property type="entry name" value="DHBP_synthase_RibB"/>
</dbReference>
<dbReference type="InterPro" id="IPR032677">
    <property type="entry name" value="GTP_cyclohydro_II"/>
</dbReference>
<dbReference type="InterPro" id="IPR000926">
    <property type="entry name" value="RibA"/>
</dbReference>
<dbReference type="InterPro" id="IPR036144">
    <property type="entry name" value="RibA-like_sf"/>
</dbReference>
<dbReference type="InterPro" id="IPR016299">
    <property type="entry name" value="Riboflavin_synth_RibBA"/>
</dbReference>
<dbReference type="NCBIfam" id="NF001591">
    <property type="entry name" value="PRK00393.1"/>
    <property type="match status" value="1"/>
</dbReference>
<dbReference type="NCBIfam" id="NF006803">
    <property type="entry name" value="PRK09311.1"/>
    <property type="match status" value="1"/>
</dbReference>
<dbReference type="NCBIfam" id="TIGR00505">
    <property type="entry name" value="ribA"/>
    <property type="match status" value="1"/>
</dbReference>
<dbReference type="NCBIfam" id="TIGR00506">
    <property type="entry name" value="ribB"/>
    <property type="match status" value="1"/>
</dbReference>
<dbReference type="PANTHER" id="PTHR21327:SF18">
    <property type="entry name" value="3,4-DIHYDROXY-2-BUTANONE 4-PHOSPHATE SYNTHASE"/>
    <property type="match status" value="1"/>
</dbReference>
<dbReference type="PANTHER" id="PTHR21327">
    <property type="entry name" value="GTP CYCLOHYDROLASE II-RELATED"/>
    <property type="match status" value="1"/>
</dbReference>
<dbReference type="Pfam" id="PF00926">
    <property type="entry name" value="DHBP_synthase"/>
    <property type="match status" value="1"/>
</dbReference>
<dbReference type="Pfam" id="PF00925">
    <property type="entry name" value="GTP_cyclohydro2"/>
    <property type="match status" value="1"/>
</dbReference>
<dbReference type="PIRSF" id="PIRSF001259">
    <property type="entry name" value="RibA"/>
    <property type="match status" value="1"/>
</dbReference>
<dbReference type="SUPFAM" id="SSF142695">
    <property type="entry name" value="RibA-like"/>
    <property type="match status" value="1"/>
</dbReference>
<dbReference type="SUPFAM" id="SSF55821">
    <property type="entry name" value="YrdC/RibB"/>
    <property type="match status" value="1"/>
</dbReference>
<evidence type="ECO:0000255" key="1">
    <source>
        <dbReference type="HAMAP-Rule" id="MF_01283"/>
    </source>
</evidence>
<reference key="1">
    <citation type="submission" date="2008-01" db="EMBL/GenBank/DDBJ databases">
        <title>Complete sequence of Thermoanaerobacter pseudethanolicus 39E.</title>
        <authorList>
            <person name="Copeland A."/>
            <person name="Lucas S."/>
            <person name="Lapidus A."/>
            <person name="Barry K."/>
            <person name="Glavina del Rio T."/>
            <person name="Dalin E."/>
            <person name="Tice H."/>
            <person name="Pitluck S."/>
            <person name="Bruce D."/>
            <person name="Goodwin L."/>
            <person name="Saunders E."/>
            <person name="Brettin T."/>
            <person name="Detter J.C."/>
            <person name="Han C."/>
            <person name="Schmutz J."/>
            <person name="Larimer F."/>
            <person name="Land M."/>
            <person name="Hauser L."/>
            <person name="Kyrpides N."/>
            <person name="Lykidis A."/>
            <person name="Hemme C."/>
            <person name="Fields M.W."/>
            <person name="He Z."/>
            <person name="Zhou J."/>
            <person name="Richardson P."/>
        </authorList>
    </citation>
    <scope>NUCLEOTIDE SEQUENCE [LARGE SCALE GENOMIC DNA]</scope>
    <source>
        <strain>ATCC 33223 / DSM 2355 / 39E</strain>
    </source>
</reference>
<gene>
    <name evidence="1" type="primary">ribBA</name>
    <name type="ordered locus">Teth39_0023</name>
</gene>